<proteinExistence type="inferred from homology"/>
<name>DNAK_METNO</name>
<comment type="function">
    <text evidence="1">Acts as a chaperone.</text>
</comment>
<comment type="induction">
    <text evidence="1">By stress conditions e.g. heat shock.</text>
</comment>
<comment type="similarity">
    <text evidence="1">Belongs to the heat shock protein 70 family.</text>
</comment>
<dbReference type="EMBL" id="CP001349">
    <property type="protein sequence ID" value="ACL61676.1"/>
    <property type="molecule type" value="Genomic_DNA"/>
</dbReference>
<dbReference type="RefSeq" id="WP_015933240.1">
    <property type="nucleotide sequence ID" value="NC_011894.1"/>
</dbReference>
<dbReference type="SMR" id="B8IHL3"/>
<dbReference type="STRING" id="460265.Mnod_6931"/>
<dbReference type="KEGG" id="mno:Mnod_6931"/>
<dbReference type="eggNOG" id="COG0443">
    <property type="taxonomic scope" value="Bacteria"/>
</dbReference>
<dbReference type="HOGENOM" id="CLU_005965_2_1_5"/>
<dbReference type="OrthoDB" id="9766019at2"/>
<dbReference type="Proteomes" id="UP000008207">
    <property type="component" value="Chromosome"/>
</dbReference>
<dbReference type="GO" id="GO:0005524">
    <property type="term" value="F:ATP binding"/>
    <property type="evidence" value="ECO:0007669"/>
    <property type="project" value="UniProtKB-UniRule"/>
</dbReference>
<dbReference type="GO" id="GO:0140662">
    <property type="term" value="F:ATP-dependent protein folding chaperone"/>
    <property type="evidence" value="ECO:0007669"/>
    <property type="project" value="InterPro"/>
</dbReference>
<dbReference type="GO" id="GO:0051082">
    <property type="term" value="F:unfolded protein binding"/>
    <property type="evidence" value="ECO:0007669"/>
    <property type="project" value="InterPro"/>
</dbReference>
<dbReference type="CDD" id="cd11733">
    <property type="entry name" value="ASKHA_NBD_HSP70_HSPA9"/>
    <property type="match status" value="1"/>
</dbReference>
<dbReference type="FunFam" id="2.60.34.10:FF:000014">
    <property type="entry name" value="Chaperone protein DnaK HSP70"/>
    <property type="match status" value="1"/>
</dbReference>
<dbReference type="FunFam" id="3.30.420.40:FF:000020">
    <property type="entry name" value="Chaperone protein HscA homolog"/>
    <property type="match status" value="1"/>
</dbReference>
<dbReference type="FunFam" id="3.30.30.30:FF:000003">
    <property type="entry name" value="Heat shock protein 9"/>
    <property type="match status" value="1"/>
</dbReference>
<dbReference type="FunFam" id="1.20.1270.10:FF:000001">
    <property type="entry name" value="Molecular chaperone DnaK"/>
    <property type="match status" value="1"/>
</dbReference>
<dbReference type="FunFam" id="3.30.420.40:FF:000004">
    <property type="entry name" value="Molecular chaperone DnaK"/>
    <property type="match status" value="1"/>
</dbReference>
<dbReference type="FunFam" id="3.90.640.10:FF:000003">
    <property type="entry name" value="Molecular chaperone DnaK"/>
    <property type="match status" value="1"/>
</dbReference>
<dbReference type="Gene3D" id="1.20.1270.10">
    <property type="match status" value="1"/>
</dbReference>
<dbReference type="Gene3D" id="3.30.420.40">
    <property type="match status" value="2"/>
</dbReference>
<dbReference type="Gene3D" id="3.90.640.10">
    <property type="entry name" value="Actin, Chain A, domain 4"/>
    <property type="match status" value="1"/>
</dbReference>
<dbReference type="Gene3D" id="2.60.34.10">
    <property type="entry name" value="Substrate Binding Domain Of DNAk, Chain A, domain 1"/>
    <property type="match status" value="1"/>
</dbReference>
<dbReference type="HAMAP" id="MF_00332">
    <property type="entry name" value="DnaK"/>
    <property type="match status" value="1"/>
</dbReference>
<dbReference type="InterPro" id="IPR043129">
    <property type="entry name" value="ATPase_NBD"/>
</dbReference>
<dbReference type="InterPro" id="IPR012725">
    <property type="entry name" value="Chaperone_DnaK"/>
</dbReference>
<dbReference type="InterPro" id="IPR018181">
    <property type="entry name" value="Heat_shock_70_CS"/>
</dbReference>
<dbReference type="InterPro" id="IPR029048">
    <property type="entry name" value="HSP70_C_sf"/>
</dbReference>
<dbReference type="InterPro" id="IPR029047">
    <property type="entry name" value="HSP70_peptide-bd_sf"/>
</dbReference>
<dbReference type="InterPro" id="IPR013126">
    <property type="entry name" value="Hsp_70_fam"/>
</dbReference>
<dbReference type="NCBIfam" id="NF001413">
    <property type="entry name" value="PRK00290.1"/>
    <property type="match status" value="1"/>
</dbReference>
<dbReference type="NCBIfam" id="NF003520">
    <property type="entry name" value="PRK05183.1"/>
    <property type="match status" value="1"/>
</dbReference>
<dbReference type="NCBIfam" id="TIGR02350">
    <property type="entry name" value="prok_dnaK"/>
    <property type="match status" value="1"/>
</dbReference>
<dbReference type="PANTHER" id="PTHR19375">
    <property type="entry name" value="HEAT SHOCK PROTEIN 70KDA"/>
    <property type="match status" value="1"/>
</dbReference>
<dbReference type="Pfam" id="PF00012">
    <property type="entry name" value="HSP70"/>
    <property type="match status" value="1"/>
</dbReference>
<dbReference type="PRINTS" id="PR00301">
    <property type="entry name" value="HEATSHOCK70"/>
</dbReference>
<dbReference type="SUPFAM" id="SSF53067">
    <property type="entry name" value="Actin-like ATPase domain"/>
    <property type="match status" value="2"/>
</dbReference>
<dbReference type="SUPFAM" id="SSF100934">
    <property type="entry name" value="Heat shock protein 70kD (HSP70), C-terminal subdomain"/>
    <property type="match status" value="1"/>
</dbReference>
<dbReference type="SUPFAM" id="SSF100920">
    <property type="entry name" value="Heat shock protein 70kD (HSP70), peptide-binding domain"/>
    <property type="match status" value="1"/>
</dbReference>
<dbReference type="PROSITE" id="PS00297">
    <property type="entry name" value="HSP70_1"/>
    <property type="match status" value="1"/>
</dbReference>
<dbReference type="PROSITE" id="PS00329">
    <property type="entry name" value="HSP70_2"/>
    <property type="match status" value="1"/>
</dbReference>
<dbReference type="PROSITE" id="PS01036">
    <property type="entry name" value="HSP70_3"/>
    <property type="match status" value="1"/>
</dbReference>
<accession>B8IHL3</accession>
<protein>
    <recommendedName>
        <fullName evidence="1">Chaperone protein DnaK</fullName>
    </recommendedName>
    <alternativeName>
        <fullName evidence="1">HSP70</fullName>
    </alternativeName>
    <alternativeName>
        <fullName evidence="1">Heat shock 70 kDa protein</fullName>
    </alternativeName>
    <alternativeName>
        <fullName evidence="1">Heat shock protein 70</fullName>
    </alternativeName>
</protein>
<evidence type="ECO:0000255" key="1">
    <source>
        <dbReference type="HAMAP-Rule" id="MF_00332"/>
    </source>
</evidence>
<evidence type="ECO:0000256" key="2">
    <source>
        <dbReference type="SAM" id="MobiDB-lite"/>
    </source>
</evidence>
<feature type="chain" id="PRO_1000133153" description="Chaperone protein DnaK">
    <location>
        <begin position="1"/>
        <end position="637"/>
    </location>
</feature>
<feature type="region of interest" description="Disordered" evidence="2">
    <location>
        <begin position="600"/>
        <end position="637"/>
    </location>
</feature>
<feature type="compositionally biased region" description="Acidic residues" evidence="2">
    <location>
        <begin position="621"/>
        <end position="630"/>
    </location>
</feature>
<feature type="modified residue" description="Phosphothreonine; by autocatalysis" evidence="1">
    <location>
        <position position="198"/>
    </location>
</feature>
<organism>
    <name type="scientific">Methylobacterium nodulans (strain LMG 21967 / CNCM I-2342 / ORS 2060)</name>
    <dbReference type="NCBI Taxonomy" id="460265"/>
    <lineage>
        <taxon>Bacteria</taxon>
        <taxon>Pseudomonadati</taxon>
        <taxon>Pseudomonadota</taxon>
        <taxon>Alphaproteobacteria</taxon>
        <taxon>Hyphomicrobiales</taxon>
        <taxon>Methylobacteriaceae</taxon>
        <taxon>Methylobacterium</taxon>
    </lineage>
</organism>
<gene>
    <name evidence="1" type="primary">dnaK</name>
    <name type="ordered locus">Mnod_6931</name>
</gene>
<sequence>MGKVIGIDLGTTNSCVAVMEGTQPKVIENAEGARTTPSIVAFTDDGERLVGQPAKRQAVTNPSRTFFAIKRLIGRTYDDPMTQKDKGLVPYAITRAGNGDAWVAADGKQFSPSQISAFTLQKMKETAESYLGQPVTQAVITVPAYFNDAQRQATKDAGKIAGLEVLRIINEPTAAALAYGLDKRKSGVIAVYDLGGGTFDVSILEIGDGVFEVKSTNGDTFLGGEDFDNRIVEYLAAEFKREQGIDLTKDKLALQRLKEAAEKAKIELSSATQTEINLPYITADASGPKHLALKLSRAKFESLVDDLIQRTIEPCRKALKDAGVSANEIDEVVLVGGMTRMPKIQDVVKTFFGKEPHKGVNPDEVVAIGAAVQAGVLQGDVKDVLLLDVTPLSLGIETLGGVFTRLIDRNTTIPTKKSQVFSTAEDNQNAVTIRVFQGEREMAADNKLLGQFDLVGIPPAPRGVPQIEVTFDIDANGIVNVTAKDKATGKEHQIRIQASGGLSETEIQRMVQEAEANAAEDKKRRELVEVKNQGESLIHATEKSVKEYGDKVSEADKAGITTAIDALRQALAGEDVETIKARTTDLMQASMKLGEAMYAASQGAGPEAGADQAQAKKDDVIDADFQEVDDKDQKKRA</sequence>
<keyword id="KW-0067">ATP-binding</keyword>
<keyword id="KW-0143">Chaperone</keyword>
<keyword id="KW-0547">Nucleotide-binding</keyword>
<keyword id="KW-0597">Phosphoprotein</keyword>
<keyword id="KW-1185">Reference proteome</keyword>
<keyword id="KW-0346">Stress response</keyword>
<reference key="1">
    <citation type="submission" date="2009-01" db="EMBL/GenBank/DDBJ databases">
        <title>Complete sequence of chromosome of Methylobacterium nodulans ORS 2060.</title>
        <authorList>
            <consortium name="US DOE Joint Genome Institute"/>
            <person name="Lucas S."/>
            <person name="Copeland A."/>
            <person name="Lapidus A."/>
            <person name="Glavina del Rio T."/>
            <person name="Dalin E."/>
            <person name="Tice H."/>
            <person name="Bruce D."/>
            <person name="Goodwin L."/>
            <person name="Pitluck S."/>
            <person name="Sims D."/>
            <person name="Brettin T."/>
            <person name="Detter J.C."/>
            <person name="Han C."/>
            <person name="Larimer F."/>
            <person name="Land M."/>
            <person name="Hauser L."/>
            <person name="Kyrpides N."/>
            <person name="Ivanova N."/>
            <person name="Marx C.J."/>
            <person name="Richardson P."/>
        </authorList>
    </citation>
    <scope>NUCLEOTIDE SEQUENCE [LARGE SCALE GENOMIC DNA]</scope>
    <source>
        <strain>LMG 21967 / CNCM I-2342 / ORS 2060</strain>
    </source>
</reference>